<evidence type="ECO:0000255" key="1">
    <source>
        <dbReference type="HAMAP-Rule" id="MF_00089"/>
    </source>
</evidence>
<dbReference type="EC" id="4.1.99.17" evidence="1"/>
<dbReference type="EMBL" id="CP000733">
    <property type="protein sequence ID" value="ABS77053.2"/>
    <property type="molecule type" value="Genomic_DNA"/>
</dbReference>
<dbReference type="SMR" id="A9KGN7"/>
<dbReference type="KEGG" id="cbd:CBUD_1749"/>
<dbReference type="HOGENOM" id="CLU_013181_2_1_6"/>
<dbReference type="UniPathway" id="UPA00060"/>
<dbReference type="Proteomes" id="UP000008555">
    <property type="component" value="Chromosome"/>
</dbReference>
<dbReference type="GO" id="GO:0005829">
    <property type="term" value="C:cytosol"/>
    <property type="evidence" value="ECO:0007669"/>
    <property type="project" value="TreeGrafter"/>
</dbReference>
<dbReference type="GO" id="GO:0051539">
    <property type="term" value="F:4 iron, 4 sulfur cluster binding"/>
    <property type="evidence" value="ECO:0007669"/>
    <property type="project" value="UniProtKB-KW"/>
</dbReference>
<dbReference type="GO" id="GO:0016830">
    <property type="term" value="F:carbon-carbon lyase activity"/>
    <property type="evidence" value="ECO:0007669"/>
    <property type="project" value="InterPro"/>
</dbReference>
<dbReference type="GO" id="GO:0008270">
    <property type="term" value="F:zinc ion binding"/>
    <property type="evidence" value="ECO:0007669"/>
    <property type="project" value="UniProtKB-UniRule"/>
</dbReference>
<dbReference type="GO" id="GO:0009228">
    <property type="term" value="P:thiamine biosynthetic process"/>
    <property type="evidence" value="ECO:0007669"/>
    <property type="project" value="UniProtKB-KW"/>
</dbReference>
<dbReference type="GO" id="GO:0009229">
    <property type="term" value="P:thiamine diphosphate biosynthetic process"/>
    <property type="evidence" value="ECO:0007669"/>
    <property type="project" value="UniProtKB-UniRule"/>
</dbReference>
<dbReference type="FunFam" id="3.20.20.540:FF:000001">
    <property type="entry name" value="Phosphomethylpyrimidine synthase"/>
    <property type="match status" value="1"/>
</dbReference>
<dbReference type="Gene3D" id="6.10.250.620">
    <property type="match status" value="1"/>
</dbReference>
<dbReference type="Gene3D" id="3.20.20.540">
    <property type="entry name" value="Radical SAM ThiC family, central domain"/>
    <property type="match status" value="1"/>
</dbReference>
<dbReference type="HAMAP" id="MF_00089">
    <property type="entry name" value="ThiC"/>
    <property type="match status" value="1"/>
</dbReference>
<dbReference type="InterPro" id="IPR037509">
    <property type="entry name" value="ThiC"/>
</dbReference>
<dbReference type="InterPro" id="IPR025747">
    <property type="entry name" value="ThiC-associated_dom"/>
</dbReference>
<dbReference type="InterPro" id="IPR038521">
    <property type="entry name" value="ThiC/Bza_core_dom"/>
</dbReference>
<dbReference type="InterPro" id="IPR002817">
    <property type="entry name" value="ThiC/BzaA/B"/>
</dbReference>
<dbReference type="NCBIfam" id="NF006763">
    <property type="entry name" value="PRK09284.1"/>
    <property type="match status" value="1"/>
</dbReference>
<dbReference type="NCBIfam" id="NF009895">
    <property type="entry name" value="PRK13352.1"/>
    <property type="match status" value="1"/>
</dbReference>
<dbReference type="NCBIfam" id="TIGR00190">
    <property type="entry name" value="thiC"/>
    <property type="match status" value="1"/>
</dbReference>
<dbReference type="PANTHER" id="PTHR30557:SF1">
    <property type="entry name" value="PHOSPHOMETHYLPYRIMIDINE SYNTHASE, CHLOROPLASTIC"/>
    <property type="match status" value="1"/>
</dbReference>
<dbReference type="PANTHER" id="PTHR30557">
    <property type="entry name" value="THIAMINE BIOSYNTHESIS PROTEIN THIC"/>
    <property type="match status" value="1"/>
</dbReference>
<dbReference type="Pfam" id="PF13667">
    <property type="entry name" value="ThiC-associated"/>
    <property type="match status" value="1"/>
</dbReference>
<dbReference type="Pfam" id="PF01964">
    <property type="entry name" value="ThiC_Rad_SAM"/>
    <property type="match status" value="1"/>
</dbReference>
<dbReference type="SFLD" id="SFLDF00407">
    <property type="entry name" value="phosphomethylpyrimidine_syntha"/>
    <property type="match status" value="1"/>
</dbReference>
<dbReference type="SFLD" id="SFLDG01114">
    <property type="entry name" value="phosphomethylpyrimidine_syntha"/>
    <property type="match status" value="1"/>
</dbReference>
<dbReference type="SFLD" id="SFLDS00113">
    <property type="entry name" value="Radical_SAM_Phosphomethylpyrim"/>
    <property type="match status" value="1"/>
</dbReference>
<gene>
    <name evidence="1" type="primary">thiC</name>
    <name type="ordered locus">CBUD_1749</name>
</gene>
<keyword id="KW-0004">4Fe-4S</keyword>
<keyword id="KW-0408">Iron</keyword>
<keyword id="KW-0411">Iron-sulfur</keyword>
<keyword id="KW-0456">Lyase</keyword>
<keyword id="KW-0479">Metal-binding</keyword>
<keyword id="KW-0949">S-adenosyl-L-methionine</keyword>
<keyword id="KW-0784">Thiamine biosynthesis</keyword>
<keyword id="KW-0862">Zinc</keyword>
<name>THIC_COXBN</name>
<feature type="chain" id="PRO_1000198050" description="Phosphomethylpyrimidine synthase">
    <location>
        <begin position="1"/>
        <end position="554"/>
    </location>
</feature>
<feature type="binding site" evidence="1">
    <location>
        <position position="188"/>
    </location>
    <ligand>
        <name>substrate</name>
    </ligand>
</feature>
<feature type="binding site" evidence="1">
    <location>
        <position position="217"/>
    </location>
    <ligand>
        <name>substrate</name>
    </ligand>
</feature>
<feature type="binding site" evidence="1">
    <location>
        <position position="246"/>
    </location>
    <ligand>
        <name>substrate</name>
    </ligand>
</feature>
<feature type="binding site" evidence="1">
    <location>
        <position position="282"/>
    </location>
    <ligand>
        <name>substrate</name>
    </ligand>
</feature>
<feature type="binding site" evidence="1">
    <location>
        <begin position="302"/>
        <end position="304"/>
    </location>
    <ligand>
        <name>substrate</name>
    </ligand>
</feature>
<feature type="binding site" evidence="1">
    <location>
        <begin position="343"/>
        <end position="346"/>
    </location>
    <ligand>
        <name>substrate</name>
    </ligand>
</feature>
<feature type="binding site" evidence="1">
    <location>
        <position position="382"/>
    </location>
    <ligand>
        <name>substrate</name>
    </ligand>
</feature>
<feature type="binding site" evidence="1">
    <location>
        <position position="386"/>
    </location>
    <ligand>
        <name>Zn(2+)</name>
        <dbReference type="ChEBI" id="CHEBI:29105"/>
    </ligand>
</feature>
<feature type="binding site" evidence="1">
    <location>
        <position position="409"/>
    </location>
    <ligand>
        <name>substrate</name>
    </ligand>
</feature>
<feature type="binding site" evidence="1">
    <location>
        <position position="450"/>
    </location>
    <ligand>
        <name>Zn(2+)</name>
        <dbReference type="ChEBI" id="CHEBI:29105"/>
    </ligand>
</feature>
<feature type="binding site" evidence="1">
    <location>
        <position position="530"/>
    </location>
    <ligand>
        <name>[4Fe-4S] cluster</name>
        <dbReference type="ChEBI" id="CHEBI:49883"/>
        <note>4Fe-4S-S-AdoMet</note>
    </ligand>
</feature>
<feature type="binding site" evidence="1">
    <location>
        <position position="533"/>
    </location>
    <ligand>
        <name>[4Fe-4S] cluster</name>
        <dbReference type="ChEBI" id="CHEBI:49883"/>
        <note>4Fe-4S-S-AdoMet</note>
    </ligand>
</feature>
<feature type="binding site" evidence="1">
    <location>
        <position position="538"/>
    </location>
    <ligand>
        <name>[4Fe-4S] cluster</name>
        <dbReference type="ChEBI" id="CHEBI:49883"/>
        <note>4Fe-4S-S-AdoMet</note>
    </ligand>
</feature>
<proteinExistence type="inferred from homology"/>
<comment type="function">
    <text evidence="1">Catalyzes the synthesis of the hydroxymethylpyrimidine phosphate (HMP-P) moiety of thiamine from aminoimidazole ribotide (AIR) in a radical S-adenosyl-L-methionine (SAM)-dependent reaction.</text>
</comment>
<comment type="catalytic activity">
    <reaction evidence="1">
        <text>5-amino-1-(5-phospho-beta-D-ribosyl)imidazole + S-adenosyl-L-methionine = 4-amino-2-methyl-5-(phosphooxymethyl)pyrimidine + CO + 5'-deoxyadenosine + formate + L-methionine + 3 H(+)</text>
        <dbReference type="Rhea" id="RHEA:24840"/>
        <dbReference type="ChEBI" id="CHEBI:15378"/>
        <dbReference type="ChEBI" id="CHEBI:15740"/>
        <dbReference type="ChEBI" id="CHEBI:17245"/>
        <dbReference type="ChEBI" id="CHEBI:17319"/>
        <dbReference type="ChEBI" id="CHEBI:57844"/>
        <dbReference type="ChEBI" id="CHEBI:58354"/>
        <dbReference type="ChEBI" id="CHEBI:59789"/>
        <dbReference type="ChEBI" id="CHEBI:137981"/>
        <dbReference type="EC" id="4.1.99.17"/>
    </reaction>
</comment>
<comment type="cofactor">
    <cofactor evidence="1">
        <name>[4Fe-4S] cluster</name>
        <dbReference type="ChEBI" id="CHEBI:49883"/>
    </cofactor>
    <text evidence="1">Binds 1 [4Fe-4S] cluster per subunit. The cluster is coordinated with 3 cysteines and an exchangeable S-adenosyl-L-methionine.</text>
</comment>
<comment type="pathway">
    <text evidence="1">Cofactor biosynthesis; thiamine diphosphate biosynthesis.</text>
</comment>
<comment type="subunit">
    <text evidence="1">Homodimer.</text>
</comment>
<comment type="similarity">
    <text evidence="1">Belongs to the ThiC family.</text>
</comment>
<reference key="1">
    <citation type="journal article" date="2009" name="Infect. Immun.">
        <title>Comparative genomics reveal extensive transposon-mediated genomic plasticity and diversity among potential effector proteins within the genus Coxiella.</title>
        <authorList>
            <person name="Beare P.A."/>
            <person name="Unsworth N."/>
            <person name="Andoh M."/>
            <person name="Voth D.E."/>
            <person name="Omsland A."/>
            <person name="Gilk S.D."/>
            <person name="Williams K.P."/>
            <person name="Sobral B.W."/>
            <person name="Kupko J.J. III"/>
            <person name="Porcella S.F."/>
            <person name="Samuel J.E."/>
            <person name="Heinzen R.A."/>
        </authorList>
    </citation>
    <scope>NUCLEOTIDE SEQUENCE [LARGE SCALE GENOMIC DNA]</scope>
    <source>
        <strain>Dugway 5J108-111</strain>
    </source>
</reference>
<protein>
    <recommendedName>
        <fullName evidence="1">Phosphomethylpyrimidine synthase</fullName>
        <ecNumber evidence="1">4.1.99.17</ecNumber>
    </recommendedName>
    <alternativeName>
        <fullName evidence="1">Hydroxymethylpyrimidine phosphate synthase</fullName>
        <shortName evidence="1">HMP-P synthase</shortName>
        <shortName evidence="1">HMP-phosphate synthase</shortName>
        <shortName evidence="1">HMPP synthase</shortName>
    </alternativeName>
    <alternativeName>
        <fullName evidence="1">Thiamine biosynthesis protein ThiC</fullName>
    </alternativeName>
</protein>
<organism>
    <name type="scientific">Coxiella burnetii (strain Dugway 5J108-111)</name>
    <dbReference type="NCBI Taxonomy" id="434922"/>
    <lineage>
        <taxon>Bacteria</taxon>
        <taxon>Pseudomonadati</taxon>
        <taxon>Pseudomonadota</taxon>
        <taxon>Gammaproteobacteria</taxon>
        <taxon>Legionellales</taxon>
        <taxon>Coxiellaceae</taxon>
        <taxon>Coxiella</taxon>
    </lineage>
</organism>
<sequence>MRREGTMRLHRTFLLRVYLKESAVITYPASKKIYCQGKIFPTIRVGMREIQLTNGDSLTLYDTSGPYSDPNISIKSPQGLPRLREPWIKVRPRKTQLAFAKEGVITPEMEYAAIRENQKRELKKNTDQERERRLQGNSLSARIPNPITPEFIRNEIACGRAILPANINHPESEPMIIGRHFLVKVNANIGNSSLTSSVEEEVEKLIWALRWGADTVMDLSTGKKIKEIRETILRHSPVPIGTVPLYEALEKVDGDVKALTWEIFRDTLISQAEQGVDYFTIHAGVLNRFIPLTQKRVTGIVSRGGSLMAKWCLLHREENFLYTHFTEICEIMRAYDVSFSLGDGLRPGSIADANDEAQFAELKIQGELNRIAWKYGVQVMNEGPGHIPLNLIEENMTKQLAYCREAPFYTLGPLTTDIAPGYDHIGSAIGAAFIAWQGCALLCYVTPKEHLGLPNKQDVKEGLIAYKIAAHAADLAKGHPAARQRDDLLSQARFEFRWHDQFNLALDAETARLFHDETLPKESAKHAHFCSLCGPKFCAYKTSHEVRDTLQKVT</sequence>
<accession>A9KGN7</accession>